<reference key="1">
    <citation type="journal article" date="1990" name="Cell">
        <title>The b alleles of U. maydis, whose combinations program pathogenic development, code for polypeptides containing a homeodomain-related motif.</title>
        <authorList>
            <person name="Schulz B."/>
            <person name="Banuett F."/>
            <person name="Dahl M."/>
            <person name="Schlesinger R."/>
            <person name="Schaefer W."/>
            <person name="Martin T."/>
            <person name="Herskowitz I."/>
            <person name="Kahmann R."/>
        </authorList>
    </citation>
    <scope>NUCLEOTIDE SEQUENCE [GENOMIC DNA]</scope>
    <source>
        <strain>RK138</strain>
    </source>
</reference>
<feature type="chain" id="PRO_0000049404" description="Mating-type locus allele B4 protein">
    <location>
        <begin position="1"/>
        <end position="410"/>
    </location>
</feature>
<feature type="DNA-binding region" description="Homeobox; TALE-type" evidence="2">
    <location>
        <begin position="107"/>
        <end position="184"/>
    </location>
</feature>
<feature type="region of interest" description="Variable domain between B alleles">
    <location>
        <begin position="1"/>
        <end position="110"/>
    </location>
</feature>
<feature type="region of interest" description="Highly conserved between B alleles">
    <location>
        <begin position="111"/>
        <end position="410"/>
    </location>
</feature>
<feature type="region of interest" description="Disordered" evidence="3">
    <location>
        <begin position="202"/>
        <end position="241"/>
    </location>
</feature>
<feature type="region of interest" description="Disordered" evidence="3">
    <location>
        <begin position="278"/>
        <end position="335"/>
    </location>
</feature>
<feature type="region of interest" description="Not essential for B4 function">
    <location>
        <begin position="333"/>
        <end position="410"/>
    </location>
</feature>
<feature type="region of interest" description="Disordered" evidence="3">
    <location>
        <begin position="375"/>
        <end position="394"/>
    </location>
</feature>
<feature type="short sequence motif" description="Nuclear localization signal" evidence="1">
    <location>
        <begin position="276"/>
        <end position="308"/>
    </location>
</feature>
<feature type="compositionally biased region" description="Low complexity" evidence="3">
    <location>
        <begin position="206"/>
        <end position="222"/>
    </location>
</feature>
<feature type="compositionally biased region" description="Basic residues" evidence="3">
    <location>
        <begin position="294"/>
        <end position="307"/>
    </location>
</feature>
<feature type="compositionally biased region" description="Polar residues" evidence="3">
    <location>
        <begin position="312"/>
        <end position="335"/>
    </location>
</feature>
<feature type="compositionally biased region" description="Basic residues" evidence="3">
    <location>
        <begin position="375"/>
        <end position="388"/>
    </location>
</feature>
<dbReference type="EMBL" id="M58556">
    <property type="protein sequence ID" value="AAA63556.1"/>
    <property type="molecule type" value="Genomic_DNA"/>
</dbReference>
<dbReference type="PIR" id="C32696">
    <property type="entry name" value="C32696"/>
</dbReference>
<dbReference type="SMR" id="P22018"/>
<dbReference type="VEuPathDB" id="FungiDB:UMAG_12052"/>
<dbReference type="GO" id="GO:0005634">
    <property type="term" value="C:nucleus"/>
    <property type="evidence" value="ECO:0007669"/>
    <property type="project" value="UniProtKB-SubCell"/>
</dbReference>
<dbReference type="GO" id="GO:0003677">
    <property type="term" value="F:DNA binding"/>
    <property type="evidence" value="ECO:0007669"/>
    <property type="project" value="UniProtKB-KW"/>
</dbReference>
<dbReference type="GO" id="GO:0006355">
    <property type="term" value="P:regulation of DNA-templated transcription"/>
    <property type="evidence" value="ECO:0007669"/>
    <property type="project" value="InterPro"/>
</dbReference>
<dbReference type="CDD" id="cd00086">
    <property type="entry name" value="homeodomain"/>
    <property type="match status" value="1"/>
</dbReference>
<dbReference type="Gene3D" id="1.10.10.60">
    <property type="entry name" value="Homeodomain-like"/>
    <property type="match status" value="1"/>
</dbReference>
<dbReference type="InterPro" id="IPR001356">
    <property type="entry name" value="HD"/>
</dbReference>
<dbReference type="InterPro" id="IPR009057">
    <property type="entry name" value="Homeodomain-like_sf"/>
</dbReference>
<dbReference type="InterPro" id="IPR008422">
    <property type="entry name" value="KN_HD"/>
</dbReference>
<dbReference type="InterPro" id="IPR008888">
    <property type="entry name" value="Ustilago_mating"/>
</dbReference>
<dbReference type="Pfam" id="PF05920">
    <property type="entry name" value="Homeobox_KN"/>
    <property type="match status" value="1"/>
</dbReference>
<dbReference type="Pfam" id="PF05722">
    <property type="entry name" value="Ustilago_mating"/>
    <property type="match status" value="1"/>
</dbReference>
<dbReference type="SUPFAM" id="SSF46689">
    <property type="entry name" value="Homeodomain-like"/>
    <property type="match status" value="1"/>
</dbReference>
<dbReference type="PROSITE" id="PS50071">
    <property type="entry name" value="HOMEOBOX_2"/>
    <property type="match status" value="1"/>
</dbReference>
<evidence type="ECO:0000255" key="1"/>
<evidence type="ECO:0000255" key="2">
    <source>
        <dbReference type="PROSITE-ProRule" id="PRU00108"/>
    </source>
</evidence>
<evidence type="ECO:0000256" key="3">
    <source>
        <dbReference type="SAM" id="MobiDB-lite"/>
    </source>
</evidence>
<evidence type="ECO:0000305" key="4"/>
<sequence>MSSDPKISITSFLECLSEIEEEFLRDKEKNPPVLVSKLQELQQKTPNNIANLDHDPETIQKIHQTTHRINVAVKAFICIDQTFVSLRSDAVEDASRALKKANASSPVVGCRELSEDLPAYHMRKHFLHTLENPYPTQEEKETLVRLTNESTARVGQSIVNRPPLEVHQLTLWFINARRRSGWSHILKKFAREDRSRMKHLVRAKLSSSNQSTPPSPTSEYPSNNLDDFLSDNLGRPLTPADKQQFEDDWASMISWIKYGVKEKVGDWVYDLCAASKKTPKPGMPRPVTTVAKRQPARKTKPAAKPKSRTANPRASTTPSIDSTLDSSKLESTPELSMCSTADTSFSTFGSSLSMSHYDPFQYGNDILQSPTFKARGNRKVKALPKRAGKQQPDEVENGKIPFLCLSVAFV</sequence>
<name>B4_MYCMD</name>
<accession>P22018</accession>
<organism>
    <name type="scientific">Mycosarcoma maydis</name>
    <name type="common">Corn smut fungus</name>
    <name type="synonym">Ustilago maydis</name>
    <dbReference type="NCBI Taxonomy" id="5270"/>
    <lineage>
        <taxon>Eukaryota</taxon>
        <taxon>Fungi</taxon>
        <taxon>Dikarya</taxon>
        <taxon>Basidiomycota</taxon>
        <taxon>Ustilaginomycotina</taxon>
        <taxon>Ustilaginomycetes</taxon>
        <taxon>Ustilaginales</taxon>
        <taxon>Ustilaginaceae</taxon>
        <taxon>Mycosarcoma</taxon>
    </lineage>
</organism>
<comment type="function">
    <text>The B locus has at least 25 alleles, and any combination of two different B alleles yields a multimeric regulatory protein, that activates genes responsible for the pathogenicity and for the sexual development of the fungus within the corn plant.</text>
</comment>
<comment type="subcellular location">
    <subcellularLocation>
        <location>Nucleus</location>
    </subcellularLocation>
</comment>
<comment type="similarity">
    <text evidence="4">Belongs to the TALE/M-ATYP homeobox family.</text>
</comment>
<keyword id="KW-0238">DNA-binding</keyword>
<keyword id="KW-0371">Homeobox</keyword>
<keyword id="KW-0539">Nucleus</keyword>
<proteinExistence type="inferred from homology"/>
<protein>
    <recommendedName>
        <fullName>Mating-type locus allele B4 protein</fullName>
    </recommendedName>
</protein>